<reference key="1">
    <citation type="journal article" date="2003" name="Mol. Microbiol.">
        <title>An integrated analysis of the genome of the hyperthermophilic archaeon Pyrococcus abyssi.</title>
        <authorList>
            <person name="Cohen G.N."/>
            <person name="Barbe V."/>
            <person name="Flament D."/>
            <person name="Galperin M."/>
            <person name="Heilig R."/>
            <person name="Lecompte O."/>
            <person name="Poch O."/>
            <person name="Prieur D."/>
            <person name="Querellou J."/>
            <person name="Ripp R."/>
            <person name="Thierry J.-C."/>
            <person name="Van der Oost J."/>
            <person name="Weissenbach J."/>
            <person name="Zivanovic Y."/>
            <person name="Forterre P."/>
        </authorList>
    </citation>
    <scope>NUCLEOTIDE SEQUENCE [LARGE SCALE GENOMIC DNA]</scope>
    <source>
        <strain>GE5 / Orsay</strain>
    </source>
</reference>
<reference key="2">
    <citation type="journal article" date="2012" name="Curr. Microbiol.">
        <title>Re-annotation of two hyperthermophilic archaea Pyrococcus abyssi GE5 and Pyrococcus furiosus DSM 3638.</title>
        <authorList>
            <person name="Gao J."/>
            <person name="Wang J."/>
        </authorList>
    </citation>
    <scope>GENOME REANNOTATION</scope>
    <source>
        <strain>GE5 / Orsay</strain>
    </source>
</reference>
<feature type="chain" id="PRO_0000156667" description="Mevalonate kinase">
    <location>
        <begin position="1"/>
        <end position="335"/>
    </location>
</feature>
<feature type="active site" description="Proton acceptor" evidence="1">
    <location>
        <position position="162"/>
    </location>
</feature>
<feature type="binding site" evidence="1">
    <location>
        <begin position="111"/>
        <end position="121"/>
    </location>
    <ligand>
        <name>ATP</name>
        <dbReference type="ChEBI" id="CHEBI:30616"/>
    </ligand>
</feature>
<sequence length="335" mass="35774">MPRLVLASAPAKIILFGEHSVVYGKPAIASAIDLRTYVRAEFNDSGNIKIEAHDIKTPGLIVSFSEDKIYFETDYGKAAEVLSYVRHAIELVLEEADKRTGVSVSITSQIPVGAGLGSSAAVAVATIGAVSKLLDLELSKEEIAKMGHKVELLVQGASSGIDPTVSAIGGFLYYKQGEFEHLPFVELPIVVGYTGSSGSTKELVAMVRRRYEEMPELIEPILESMGKLVDKAKEVIISKLDEEEKFLKLGELMNINHGLLDALGVSTKKLSELVYAARTAGAIGAKLTGAGGGGCMYALAPGKQREVATAIKIAGGTPMITRISKEGLRIEEVRE</sequence>
<protein>
    <recommendedName>
        <fullName evidence="1">Mevalonate kinase</fullName>
        <shortName evidence="1">MK</shortName>
        <shortName evidence="1">MVK</shortName>
        <ecNumber evidence="1">2.7.1.36</ecNumber>
    </recommendedName>
</protein>
<proteinExistence type="inferred from homology"/>
<accession>Q9V187</accession>
<accession>G8ZGQ1</accession>
<organism>
    <name type="scientific">Pyrococcus abyssi (strain GE5 / Orsay)</name>
    <dbReference type="NCBI Taxonomy" id="272844"/>
    <lineage>
        <taxon>Archaea</taxon>
        <taxon>Methanobacteriati</taxon>
        <taxon>Methanobacteriota</taxon>
        <taxon>Thermococci</taxon>
        <taxon>Thermococcales</taxon>
        <taxon>Thermococcaceae</taxon>
        <taxon>Pyrococcus</taxon>
    </lineage>
</organism>
<evidence type="ECO:0000255" key="1">
    <source>
        <dbReference type="HAMAP-Rule" id="MF_00217"/>
    </source>
</evidence>
<name>MVK_PYRAB</name>
<keyword id="KW-0067">ATP-binding</keyword>
<keyword id="KW-0963">Cytoplasm</keyword>
<keyword id="KW-0414">Isoprene biosynthesis</keyword>
<keyword id="KW-0418">Kinase</keyword>
<keyword id="KW-0444">Lipid biosynthesis</keyword>
<keyword id="KW-0443">Lipid metabolism</keyword>
<keyword id="KW-0460">Magnesium</keyword>
<keyword id="KW-0547">Nucleotide-binding</keyword>
<keyword id="KW-0808">Transferase</keyword>
<comment type="function">
    <text evidence="1">Catalyzes the phosphorylation of (R)-mevalonate (MVA) to (R)-mevalonate 5-phosphate (MVAP). Functions in the mevalonate (MVA) pathway leading to isopentenyl diphosphate (IPP), a key precursor for the biosynthesis of isoprenoid compounds such as archaeal membrane lipids.</text>
</comment>
<comment type="catalytic activity">
    <reaction evidence="1">
        <text>(R)-mevalonate + ATP = (R)-5-phosphomevalonate + ADP + H(+)</text>
        <dbReference type="Rhea" id="RHEA:17065"/>
        <dbReference type="ChEBI" id="CHEBI:15378"/>
        <dbReference type="ChEBI" id="CHEBI:30616"/>
        <dbReference type="ChEBI" id="CHEBI:36464"/>
        <dbReference type="ChEBI" id="CHEBI:58146"/>
        <dbReference type="ChEBI" id="CHEBI:456216"/>
        <dbReference type="EC" id="2.7.1.36"/>
    </reaction>
</comment>
<comment type="cofactor">
    <cofactor evidence="1">
        <name>Mg(2+)</name>
        <dbReference type="ChEBI" id="CHEBI:18420"/>
    </cofactor>
</comment>
<comment type="pathway">
    <text evidence="1">Isoprenoid biosynthesis; isopentenyl diphosphate biosynthesis via mevalonate pathway; isopentenyl diphosphate from (R)-mevalonate: step 1/3.</text>
</comment>
<comment type="subunit">
    <text evidence="1">Homodimer.</text>
</comment>
<comment type="subcellular location">
    <subcellularLocation>
        <location evidence="1">Cytoplasm</location>
    </subcellularLocation>
</comment>
<comment type="similarity">
    <text evidence="1">Belongs to the GHMP kinase family. Mevalonate kinase subfamily.</text>
</comment>
<gene>
    <name evidence="1" type="primary">mvk</name>
    <name type="ordered locus">PYRAB05410</name>
    <name type="ORF">PAB0372</name>
</gene>
<dbReference type="EC" id="2.7.1.36" evidence="1"/>
<dbReference type="EMBL" id="AJ248284">
    <property type="protein sequence ID" value="CAB49463.1"/>
    <property type="molecule type" value="Genomic_DNA"/>
</dbReference>
<dbReference type="EMBL" id="HE613800">
    <property type="protein sequence ID" value="CCE69930.1"/>
    <property type="molecule type" value="Genomic_DNA"/>
</dbReference>
<dbReference type="PIR" id="H75172">
    <property type="entry name" value="H75172"/>
</dbReference>
<dbReference type="RefSeq" id="WP_010867665.1">
    <property type="nucleotide sequence ID" value="NC_000868.1"/>
</dbReference>
<dbReference type="SMR" id="Q9V187"/>
<dbReference type="STRING" id="272844.PAB0372"/>
<dbReference type="KEGG" id="pab:PAB0372"/>
<dbReference type="PATRIC" id="fig|272844.11.peg.576"/>
<dbReference type="eggNOG" id="arCOG01028">
    <property type="taxonomic scope" value="Archaea"/>
</dbReference>
<dbReference type="HOGENOM" id="CLU_017814_0_0_2"/>
<dbReference type="OrthoDB" id="19001at2157"/>
<dbReference type="PhylomeDB" id="Q9V187"/>
<dbReference type="UniPathway" id="UPA00057">
    <property type="reaction ID" value="UER00098"/>
</dbReference>
<dbReference type="Proteomes" id="UP000000810">
    <property type="component" value="Chromosome"/>
</dbReference>
<dbReference type="Proteomes" id="UP000009139">
    <property type="component" value="Chromosome"/>
</dbReference>
<dbReference type="GO" id="GO:0005829">
    <property type="term" value="C:cytosol"/>
    <property type="evidence" value="ECO:0007669"/>
    <property type="project" value="TreeGrafter"/>
</dbReference>
<dbReference type="GO" id="GO:0005524">
    <property type="term" value="F:ATP binding"/>
    <property type="evidence" value="ECO:0007669"/>
    <property type="project" value="UniProtKB-UniRule"/>
</dbReference>
<dbReference type="GO" id="GO:0000287">
    <property type="term" value="F:magnesium ion binding"/>
    <property type="evidence" value="ECO:0007669"/>
    <property type="project" value="UniProtKB-UniRule"/>
</dbReference>
<dbReference type="GO" id="GO:0004496">
    <property type="term" value="F:mevalonate kinase activity"/>
    <property type="evidence" value="ECO:0007669"/>
    <property type="project" value="UniProtKB-UniRule"/>
</dbReference>
<dbReference type="GO" id="GO:0019287">
    <property type="term" value="P:isopentenyl diphosphate biosynthetic process, mevalonate pathway"/>
    <property type="evidence" value="ECO:0007669"/>
    <property type="project" value="UniProtKB-UniRule"/>
</dbReference>
<dbReference type="FunFam" id="3.30.230.10:FF:000151">
    <property type="entry name" value="Mevalonate kinase"/>
    <property type="match status" value="1"/>
</dbReference>
<dbReference type="Gene3D" id="3.30.230.10">
    <property type="match status" value="1"/>
</dbReference>
<dbReference type="Gene3D" id="3.30.70.890">
    <property type="entry name" value="GHMP kinase, C-terminal domain"/>
    <property type="match status" value="1"/>
</dbReference>
<dbReference type="HAMAP" id="MF_00217">
    <property type="entry name" value="Mevalonate_kinase"/>
    <property type="match status" value="1"/>
</dbReference>
<dbReference type="InterPro" id="IPR013750">
    <property type="entry name" value="GHMP_kinase_C_dom"/>
</dbReference>
<dbReference type="InterPro" id="IPR036554">
    <property type="entry name" value="GHMP_kinase_C_sf"/>
</dbReference>
<dbReference type="InterPro" id="IPR006204">
    <property type="entry name" value="GHMP_kinase_N_dom"/>
</dbReference>
<dbReference type="InterPro" id="IPR006203">
    <property type="entry name" value="GHMP_knse_ATP-bd_CS"/>
</dbReference>
<dbReference type="InterPro" id="IPR006205">
    <property type="entry name" value="Mev_gal_kin"/>
</dbReference>
<dbReference type="InterPro" id="IPR022937">
    <property type="entry name" value="Mevalonate_kinase_arc"/>
</dbReference>
<dbReference type="InterPro" id="IPR020568">
    <property type="entry name" value="Ribosomal_Su5_D2-typ_SF"/>
</dbReference>
<dbReference type="InterPro" id="IPR014721">
    <property type="entry name" value="Ribsml_uS5_D2-typ_fold_subgr"/>
</dbReference>
<dbReference type="NCBIfam" id="TIGR00549">
    <property type="entry name" value="mevalon_kin"/>
    <property type="match status" value="1"/>
</dbReference>
<dbReference type="NCBIfam" id="NF003036">
    <property type="entry name" value="PRK03926.1"/>
    <property type="match status" value="1"/>
</dbReference>
<dbReference type="PANTHER" id="PTHR43290">
    <property type="entry name" value="MEVALONATE KINASE"/>
    <property type="match status" value="1"/>
</dbReference>
<dbReference type="PANTHER" id="PTHR43290:SF2">
    <property type="entry name" value="MEVALONATE KINASE"/>
    <property type="match status" value="1"/>
</dbReference>
<dbReference type="Pfam" id="PF08544">
    <property type="entry name" value="GHMP_kinases_C"/>
    <property type="match status" value="1"/>
</dbReference>
<dbReference type="Pfam" id="PF00288">
    <property type="entry name" value="GHMP_kinases_N"/>
    <property type="match status" value="1"/>
</dbReference>
<dbReference type="PRINTS" id="PR00959">
    <property type="entry name" value="MEVGALKINASE"/>
</dbReference>
<dbReference type="SUPFAM" id="SSF55060">
    <property type="entry name" value="GHMP Kinase, C-terminal domain"/>
    <property type="match status" value="1"/>
</dbReference>
<dbReference type="SUPFAM" id="SSF54211">
    <property type="entry name" value="Ribosomal protein S5 domain 2-like"/>
    <property type="match status" value="1"/>
</dbReference>
<dbReference type="PROSITE" id="PS00627">
    <property type="entry name" value="GHMP_KINASES_ATP"/>
    <property type="match status" value="1"/>
</dbReference>